<accession>O09000</accession>
<accession>Q9CRD5</accession>
<comment type="function">
    <text evidence="1 7">Nuclear receptor coactivator that directly binds nuclear receptors and stimulates the transcriptional activities in a hormone-dependent fashion. Plays a central role in creating a multisubunit coactivator complex, probably via remodeling of chromatin. Involved in the coactivation of different nuclear receptors, such as for steroids (GR and ER), retinoids (RARs and RXRs), thyroid hormone (TRs), vitamin D3 (VDR) and prostanoids (PPARs). Displays histone acetyltransferase activity. Also involved in the coactivation of the NF-kappa-B pathway via its interaction with the NFKB1 subunit (By similarity).</text>
</comment>
<comment type="catalytic activity">
    <reaction>
        <text>L-lysyl-[protein] + acetyl-CoA = N(6)-acetyl-L-lysyl-[protein] + CoA + H(+)</text>
        <dbReference type="Rhea" id="RHEA:45948"/>
        <dbReference type="Rhea" id="RHEA-COMP:9752"/>
        <dbReference type="Rhea" id="RHEA-COMP:10731"/>
        <dbReference type="ChEBI" id="CHEBI:15378"/>
        <dbReference type="ChEBI" id="CHEBI:29969"/>
        <dbReference type="ChEBI" id="CHEBI:57287"/>
        <dbReference type="ChEBI" id="CHEBI:57288"/>
        <dbReference type="ChEBI" id="CHEBI:61930"/>
        <dbReference type="EC" id="2.3.1.48"/>
    </reaction>
</comment>
<comment type="activity regulation">
    <text evidence="1">Coactivator activity on nuclear receptors and NF-kappa-B pathways is enhanced by various hormones, and the TNF cytokine, respectively. TNF stimulation probably enhances phosphorylation, which in turn activates coactivator function. In contrast, acetylation by CREBBP apparently suppresses coactivation of target genes by disrupting its association with nuclear receptors (By similarity).</text>
</comment>
<comment type="subunit">
    <text evidence="2 6 9 10">Present in a complex containing NCOA2, IKKA, IKKB, IKBKG and the histone acetyltransferase protein CREBBP (By similarity). Found in a complex containing NCOA3, AR and MAK (By similarity). Interacts with ATAD2; the interaction is enhanced by estradiol (By similarity). Interacts with CARM1 (PubMed:10381882). Interacts with CASP8AP2 (By similarity). Interacts with CSNK1D (By similarity). Interacts with DDX5 (By similarity). Interacts with ESR (By similarity). Interacts with ESRRB; mediates the interaction between ESRRB and RNA polymerase II complexes and allows NCOA3 corecruitment to ESRRB, KLF4, NANOG, and SOX2 enhancer regions to trigger ESRRB-dependent gene activation involved in self-renewal and pluripotency (PubMed:23019124). Interacts with NFKB1 (By similarity). Interacts with NPAS2 (By similarity). Interacts with NR3C1 (By similarity). Interacts with NR4A1/Nur77 (By similarity). Interacts with NR4A3 (PubMed:12709428). Interacts with PCAF (By similarity). Interacts with PPARA (By similarity). Interacts with PSMB9 (By similarity). Interacts with RARA (By similarity). Interacts with RXRA (By similarity). Interacts with THRA (By similarity). Interacts with VDR (By similarity).</text>
</comment>
<comment type="subcellular location">
    <subcellularLocation>
        <location evidence="1">Cytoplasm</location>
    </subcellularLocation>
    <subcellularLocation>
        <location evidence="4">Nucleus</location>
    </subcellularLocation>
    <text evidence="1">Mainly cytoplasmic and weakly nuclear. Upon TNF activation and subsequent phosphorylation, it translocates from the cytoplasm to the nucleus (By similarity).</text>
</comment>
<comment type="tissue specificity">
    <text evidence="7">Not expressed in all steroid sensitive tissues. Highly expressed in the female reproductive system, in both oocyte and smooth muscle cells of the oviduct, but not expressed in the uterine endometrium. Highly expressed in mammary glands. Expressed moderately in smooth muscle cells of both blood vessels and intestines, and weakly expressed in hepatocytes. In brain, highly expressed in neurons of the hippocampus, and in mitral cell and granule layers of the olfactory bulb. Expressed moderately in the internal layer of cerebellum. Not expressed in the spinal cord, cardiac muscle, skeletal muscle, thymus and pancreas.</text>
</comment>
<comment type="domain">
    <text evidence="1">Contains three Leu-Xaa-Xaa-Leu-Leu (LXXLL) motifs. Motifs 1 and 2 are essential for the association with nuclear receptors, and constitute the RID domain (Receptor-interacting domain) (By similarity).</text>
</comment>
<comment type="PTM">
    <text evidence="1">Acetylated by CREBBP. Acetylation occurs in the RID domain, and disrupts the interaction with nuclear receptors and regulates its function (By similarity).</text>
</comment>
<comment type="PTM">
    <text evidence="8">Methylated by CARM1.</text>
</comment>
<comment type="PTM">
    <text evidence="1">Phosphorylated by IKK complex. Regulated its function (By similarity).</text>
</comment>
<comment type="disruption phenotype">
    <text evidence="7">Defects result in diverse phenotype of postnatal growth retardation, such as dwarfism, delayed puberty, abnormal reproductive function and mammary gland growth retardation.</text>
</comment>
<comment type="similarity">
    <text evidence="11">Belongs to the SRC/p160 nuclear receptor coactivator family.</text>
</comment>
<name>NCOA3_MOUSE</name>
<protein>
    <recommendedName>
        <fullName>Nuclear receptor coactivator 3</fullName>
        <shortName>NCoA-3</shortName>
        <ecNumber>2.3.1.48</ecNumber>
    </recommendedName>
    <alternativeName>
        <fullName>Amplified in breast cancer-1 protein homolog</fullName>
        <shortName>AIB-1</shortName>
    </alternativeName>
    <alternativeName>
        <fullName>CBP-interacting protein</fullName>
        <shortName>p/CIP</shortName>
        <shortName>pCIP</shortName>
    </alternativeName>
    <alternativeName>
        <fullName>Receptor-associated coactivator 3</fullName>
        <shortName>RAC-3</shortName>
    </alternativeName>
    <alternativeName>
        <fullName>Steroid receptor coactivator protein 3</fullName>
        <shortName>SRC-3</shortName>
    </alternativeName>
    <alternativeName>
        <fullName>Thyroid hormone receptor activator molecule 1</fullName>
        <shortName>ACTR</shortName>
        <shortName>TRAM-1</shortName>
    </alternativeName>
</protein>
<reference key="1">
    <citation type="journal article" date="1997" name="Nature">
        <title>The transcriptional co-activator p/CIP binds CBP and mediates nuclear-receptor function.</title>
        <authorList>
            <person name="Torchia J."/>
            <person name="Rose D.W."/>
            <person name="Inostroza J."/>
            <person name="Kamei Y."/>
            <person name="Westin S."/>
            <person name="Glass C.K."/>
            <person name="Rosenfeld M.G."/>
        </authorList>
    </citation>
    <scope>NUCLEOTIDE SEQUENCE [MRNA]</scope>
    <scope>INTERACTION WITH CREBBP; ESR AND RARA</scope>
</reference>
<reference key="2">
    <citation type="journal article" date="2005" name="Science">
        <title>The transcriptional landscape of the mammalian genome.</title>
        <authorList>
            <person name="Carninci P."/>
            <person name="Kasukawa T."/>
            <person name="Katayama S."/>
            <person name="Gough J."/>
            <person name="Frith M.C."/>
            <person name="Maeda N."/>
            <person name="Oyama R."/>
            <person name="Ravasi T."/>
            <person name="Lenhard B."/>
            <person name="Wells C."/>
            <person name="Kodzius R."/>
            <person name="Shimokawa K."/>
            <person name="Bajic V.B."/>
            <person name="Brenner S.E."/>
            <person name="Batalov S."/>
            <person name="Forrest A.R."/>
            <person name="Zavolan M."/>
            <person name="Davis M.J."/>
            <person name="Wilming L.G."/>
            <person name="Aidinis V."/>
            <person name="Allen J.E."/>
            <person name="Ambesi-Impiombato A."/>
            <person name="Apweiler R."/>
            <person name="Aturaliya R.N."/>
            <person name="Bailey T.L."/>
            <person name="Bansal M."/>
            <person name="Baxter L."/>
            <person name="Beisel K.W."/>
            <person name="Bersano T."/>
            <person name="Bono H."/>
            <person name="Chalk A.M."/>
            <person name="Chiu K.P."/>
            <person name="Choudhary V."/>
            <person name="Christoffels A."/>
            <person name="Clutterbuck D.R."/>
            <person name="Crowe M.L."/>
            <person name="Dalla E."/>
            <person name="Dalrymple B.P."/>
            <person name="de Bono B."/>
            <person name="Della Gatta G."/>
            <person name="di Bernardo D."/>
            <person name="Down T."/>
            <person name="Engstrom P."/>
            <person name="Fagiolini M."/>
            <person name="Faulkner G."/>
            <person name="Fletcher C.F."/>
            <person name="Fukushima T."/>
            <person name="Furuno M."/>
            <person name="Futaki S."/>
            <person name="Gariboldi M."/>
            <person name="Georgii-Hemming P."/>
            <person name="Gingeras T.R."/>
            <person name="Gojobori T."/>
            <person name="Green R.E."/>
            <person name="Gustincich S."/>
            <person name="Harbers M."/>
            <person name="Hayashi Y."/>
            <person name="Hensch T.K."/>
            <person name="Hirokawa N."/>
            <person name="Hill D."/>
            <person name="Huminiecki L."/>
            <person name="Iacono M."/>
            <person name="Ikeo K."/>
            <person name="Iwama A."/>
            <person name="Ishikawa T."/>
            <person name="Jakt M."/>
            <person name="Kanapin A."/>
            <person name="Katoh M."/>
            <person name="Kawasawa Y."/>
            <person name="Kelso J."/>
            <person name="Kitamura H."/>
            <person name="Kitano H."/>
            <person name="Kollias G."/>
            <person name="Krishnan S.P."/>
            <person name="Kruger A."/>
            <person name="Kummerfeld S.K."/>
            <person name="Kurochkin I.V."/>
            <person name="Lareau L.F."/>
            <person name="Lazarevic D."/>
            <person name="Lipovich L."/>
            <person name="Liu J."/>
            <person name="Liuni S."/>
            <person name="McWilliam S."/>
            <person name="Madan Babu M."/>
            <person name="Madera M."/>
            <person name="Marchionni L."/>
            <person name="Matsuda H."/>
            <person name="Matsuzawa S."/>
            <person name="Miki H."/>
            <person name="Mignone F."/>
            <person name="Miyake S."/>
            <person name="Morris K."/>
            <person name="Mottagui-Tabar S."/>
            <person name="Mulder N."/>
            <person name="Nakano N."/>
            <person name="Nakauchi H."/>
            <person name="Ng P."/>
            <person name="Nilsson R."/>
            <person name="Nishiguchi S."/>
            <person name="Nishikawa S."/>
            <person name="Nori F."/>
            <person name="Ohara O."/>
            <person name="Okazaki Y."/>
            <person name="Orlando V."/>
            <person name="Pang K.C."/>
            <person name="Pavan W.J."/>
            <person name="Pavesi G."/>
            <person name="Pesole G."/>
            <person name="Petrovsky N."/>
            <person name="Piazza S."/>
            <person name="Reed J."/>
            <person name="Reid J.F."/>
            <person name="Ring B.Z."/>
            <person name="Ringwald M."/>
            <person name="Rost B."/>
            <person name="Ruan Y."/>
            <person name="Salzberg S.L."/>
            <person name="Sandelin A."/>
            <person name="Schneider C."/>
            <person name="Schoenbach C."/>
            <person name="Sekiguchi K."/>
            <person name="Semple C.A."/>
            <person name="Seno S."/>
            <person name="Sessa L."/>
            <person name="Sheng Y."/>
            <person name="Shibata Y."/>
            <person name="Shimada H."/>
            <person name="Shimada K."/>
            <person name="Silva D."/>
            <person name="Sinclair B."/>
            <person name="Sperling S."/>
            <person name="Stupka E."/>
            <person name="Sugiura K."/>
            <person name="Sultana R."/>
            <person name="Takenaka Y."/>
            <person name="Taki K."/>
            <person name="Tammoja K."/>
            <person name="Tan S.L."/>
            <person name="Tang S."/>
            <person name="Taylor M.S."/>
            <person name="Tegner J."/>
            <person name="Teichmann S.A."/>
            <person name="Ueda H.R."/>
            <person name="van Nimwegen E."/>
            <person name="Verardo R."/>
            <person name="Wei C.L."/>
            <person name="Yagi K."/>
            <person name="Yamanishi H."/>
            <person name="Zabarovsky E."/>
            <person name="Zhu S."/>
            <person name="Zimmer A."/>
            <person name="Hide W."/>
            <person name="Bult C."/>
            <person name="Grimmond S.M."/>
            <person name="Teasdale R.D."/>
            <person name="Liu E.T."/>
            <person name="Brusic V."/>
            <person name="Quackenbush J."/>
            <person name="Wahlestedt C."/>
            <person name="Mattick J.S."/>
            <person name="Hume D.A."/>
            <person name="Kai C."/>
            <person name="Sasaki D."/>
            <person name="Tomaru Y."/>
            <person name="Fukuda S."/>
            <person name="Kanamori-Katayama M."/>
            <person name="Suzuki M."/>
            <person name="Aoki J."/>
            <person name="Arakawa T."/>
            <person name="Iida J."/>
            <person name="Imamura K."/>
            <person name="Itoh M."/>
            <person name="Kato T."/>
            <person name="Kawaji H."/>
            <person name="Kawagashira N."/>
            <person name="Kawashima T."/>
            <person name="Kojima M."/>
            <person name="Kondo S."/>
            <person name="Konno H."/>
            <person name="Nakano K."/>
            <person name="Ninomiya N."/>
            <person name="Nishio T."/>
            <person name="Okada M."/>
            <person name="Plessy C."/>
            <person name="Shibata K."/>
            <person name="Shiraki T."/>
            <person name="Suzuki S."/>
            <person name="Tagami M."/>
            <person name="Waki K."/>
            <person name="Watahiki A."/>
            <person name="Okamura-Oho Y."/>
            <person name="Suzuki H."/>
            <person name="Kawai J."/>
            <person name="Hayashizaki Y."/>
        </authorList>
    </citation>
    <scope>NUCLEOTIDE SEQUENCE [LARGE SCALE MRNA] OF 1360-1398</scope>
    <source>
        <strain>C57BL/6J</strain>
        <tissue>Embryonic stem cell</tissue>
    </source>
</reference>
<reference key="3">
    <citation type="journal article" date="2000" name="Proc. Natl. Acad. Sci. U.S.A.">
        <title>The steroid receptor coactivator SRC-3 (p/CIP/RAC3/AIB1/ACTR/TRAM-1) is required for normal growth, puberty, female reproductive function, and mammary gland development.</title>
        <authorList>
            <person name="Xu J."/>
            <person name="Liao L."/>
            <person name="Ning G."/>
            <person name="Yoshida-Komiya H."/>
            <person name="Deng C."/>
            <person name="O'Malley B.W."/>
        </authorList>
    </citation>
    <scope>FUNCTION</scope>
    <scope>TISSUE SPECIFICITY</scope>
    <scope>DISRUPTION PHENOTYPE</scope>
</reference>
<reference key="4">
    <citation type="journal article" date="1999" name="Science">
        <title>Regulation of transcription by a protein methyltransferase.</title>
        <authorList>
            <person name="Chen D."/>
            <person name="Ma H."/>
            <person name="Hong H."/>
            <person name="Koh S.S."/>
            <person name="Huang S.-M."/>
            <person name="Schurter B.T."/>
            <person name="Aswad D.W."/>
            <person name="Stallcup M.R."/>
        </authorList>
    </citation>
    <scope>INTERACTION WITH CARM1</scope>
</reference>
<reference key="5">
    <citation type="journal article" date="2001" name="Science">
        <title>A transcriptional switch mediated by cofactor methylation.</title>
        <authorList>
            <person name="Xu W."/>
            <person name="Chen H."/>
            <person name="Du K."/>
            <person name="Asahara H."/>
            <person name="Tini M."/>
            <person name="Emerson B.M."/>
            <person name="Montminy M."/>
            <person name="Evans R.M."/>
        </authorList>
    </citation>
    <scope>METHYLATION BY CARM1</scope>
</reference>
<reference key="6">
    <citation type="journal article" date="2003" name="J. Biol. Chem.">
        <title>The AF-1 domain of the orphan nuclear receptor NOR-1 mediates trans-activation, coactivator recruitment, and activation by the purine anti-metabolite 6-mercaptopurine.</title>
        <authorList>
            <person name="Wansa K.D."/>
            <person name="Harris J.M."/>
            <person name="Yan G."/>
            <person name="Ordentlich P."/>
            <person name="Muscat G.E."/>
        </authorList>
    </citation>
    <scope>INTERACTION WITH NR4A3</scope>
</reference>
<reference key="7">
    <citation type="journal article" date="2009" name="Immunity">
        <title>The phagosomal proteome in interferon-gamma-activated macrophages.</title>
        <authorList>
            <person name="Trost M."/>
            <person name="English L."/>
            <person name="Lemieux S."/>
            <person name="Courcelles M."/>
            <person name="Desjardins M."/>
            <person name="Thibault P."/>
        </authorList>
    </citation>
    <scope>PHOSPHORYLATION [LARGE SCALE ANALYSIS] AT SER-215; SER-544; SER-720; SER-847 AND SER-850</scope>
    <scope>IDENTIFICATION BY MASS SPECTROMETRY [LARGE SCALE ANALYSIS]</scope>
</reference>
<reference key="8">
    <citation type="journal article" date="2010" name="Cell">
        <title>A tissue-specific atlas of mouse protein phosphorylation and expression.</title>
        <authorList>
            <person name="Huttlin E.L."/>
            <person name="Jedrychowski M.P."/>
            <person name="Elias J.E."/>
            <person name="Goswami T."/>
            <person name="Rad R."/>
            <person name="Beausoleil S.A."/>
            <person name="Villen J."/>
            <person name="Haas W."/>
            <person name="Sowa M.E."/>
            <person name="Gygi S.P."/>
        </authorList>
    </citation>
    <scope>PHOSPHORYLATION [LARGE SCALE ANALYSIS] AT SER-215; SER-544; SER-562; SER-847 AND SER-850</scope>
    <scope>IDENTIFICATION BY MASS SPECTROMETRY [LARGE SCALE ANALYSIS]</scope>
    <source>
        <tissue>Brown adipose tissue</tissue>
        <tissue>Heart</tissue>
        <tissue>Kidney</tissue>
        <tissue>Liver</tissue>
        <tissue>Lung</tissue>
        <tissue>Pancreas</tissue>
        <tissue>Spleen</tissue>
        <tissue>Testis</tissue>
    </source>
</reference>
<reference key="9">
    <citation type="journal article" date="2012" name="Genes Dev.">
        <title>Ncoa3 functions as an essential Esrrb coactivator to sustain embryonic stem cell self-renewal and reprogramming.</title>
        <authorList>
            <person name="Percharde M."/>
            <person name="Lavial F."/>
            <person name="Ng J.H."/>
            <person name="Kumar V."/>
            <person name="Tomaz R.A."/>
            <person name="Martin N."/>
            <person name="Yeo J.C."/>
            <person name="Gil J."/>
            <person name="Prabhakar S."/>
            <person name="Ng H.H."/>
            <person name="Parker M.G."/>
            <person name="Azuara V."/>
        </authorList>
    </citation>
    <scope>INTERACTION WITH ESRRB</scope>
</reference>
<reference key="10">
    <citation type="journal article" date="2013" name="Mol. Cell">
        <title>SIRT5-mediated lysine desuccinylation impacts diverse metabolic pathways.</title>
        <authorList>
            <person name="Park J."/>
            <person name="Chen Y."/>
            <person name="Tishkoff D.X."/>
            <person name="Peng C."/>
            <person name="Tan M."/>
            <person name="Dai L."/>
            <person name="Xie Z."/>
            <person name="Zhang Y."/>
            <person name="Zwaans B.M."/>
            <person name="Skinner M.E."/>
            <person name="Lombard D.B."/>
            <person name="Zhao Y."/>
        </authorList>
    </citation>
    <scope>ACETYLATION [LARGE SCALE ANALYSIS] AT LYS-609; LYS-612 AND LYS-613</scope>
    <scope>IDENTIFICATION BY MASS SPECTROMETRY [LARGE SCALE ANALYSIS]</scope>
    <source>
        <tissue>Embryonic fibroblast</tissue>
    </source>
</reference>
<reference key="11">
    <citation type="journal article" date="2014" name="Mol. Cell. Proteomics">
        <title>Immunoaffinity enrichment and mass spectrometry analysis of protein methylation.</title>
        <authorList>
            <person name="Guo A."/>
            <person name="Gu H."/>
            <person name="Zhou J."/>
            <person name="Mulhern D."/>
            <person name="Wang Y."/>
            <person name="Lee K.A."/>
            <person name="Yang V."/>
            <person name="Aguiar M."/>
            <person name="Kornhauser J."/>
            <person name="Jia X."/>
            <person name="Ren J."/>
            <person name="Beausoleil S.A."/>
            <person name="Silva J.C."/>
            <person name="Vemulapalli V."/>
            <person name="Bedford M.T."/>
            <person name="Comb M.J."/>
        </authorList>
    </citation>
    <scope>METHYLATION [LARGE SCALE ANALYSIS] AT ARG-1178; ARG-1184 AND ARG-1195</scope>
    <scope>IDENTIFICATION BY MASS SPECTROMETRY [LARGE SCALE ANALYSIS]</scope>
    <source>
        <tissue>Brain</tissue>
        <tissue>Embryo</tissue>
    </source>
</reference>
<feature type="initiator methionine" description="Removed" evidence="2">
    <location>
        <position position="1"/>
    </location>
</feature>
<feature type="chain" id="PRO_0000094407" description="Nuclear receptor coactivator 3">
    <location>
        <begin position="2"/>
        <end position="1398"/>
    </location>
</feature>
<feature type="domain" description="bHLH" evidence="4">
    <location>
        <begin position="26"/>
        <end position="83"/>
    </location>
</feature>
<feature type="domain" description="PAS" evidence="3">
    <location>
        <begin position="111"/>
        <end position="181"/>
    </location>
</feature>
<feature type="region of interest" description="Disordered" evidence="5">
    <location>
        <begin position="1"/>
        <end position="25"/>
    </location>
</feature>
<feature type="region of interest" description="Disordered" evidence="5">
    <location>
        <begin position="396"/>
        <end position="512"/>
    </location>
</feature>
<feature type="region of interest" description="Disordered" evidence="5">
    <location>
        <begin position="530"/>
        <end position="611"/>
    </location>
</feature>
<feature type="region of interest" description="Disordered" evidence="5">
    <location>
        <begin position="625"/>
        <end position="668"/>
    </location>
</feature>
<feature type="region of interest" description="Disordered" evidence="5">
    <location>
        <begin position="697"/>
        <end position="724"/>
    </location>
</feature>
<feature type="region of interest" description="Disordered" evidence="5">
    <location>
        <begin position="748"/>
        <end position="788"/>
    </location>
</feature>
<feature type="region of interest" description="Disordered" evidence="5">
    <location>
        <begin position="805"/>
        <end position="839"/>
    </location>
</feature>
<feature type="region of interest" description="Disordered" evidence="5">
    <location>
        <begin position="891"/>
        <end position="1054"/>
    </location>
</feature>
<feature type="region of interest" description="Interaction with CREBBP" evidence="1">
    <location>
        <begin position="949"/>
        <end position="1113"/>
    </location>
</feature>
<feature type="region of interest" description="Acetyltransferase">
    <location>
        <begin position="1104"/>
        <end position="1278"/>
    </location>
</feature>
<feature type="region of interest" description="Disordered" evidence="5">
    <location>
        <begin position="1296"/>
        <end position="1323"/>
    </location>
</feature>
<feature type="short sequence motif" description="LXXLL motif 1">
    <location>
        <begin position="678"/>
        <end position="682"/>
    </location>
</feature>
<feature type="short sequence motif" description="LXXLL motif 2">
    <location>
        <begin position="730"/>
        <end position="734"/>
    </location>
</feature>
<feature type="short sequence motif" description="LXXLL motif 3">
    <location>
        <begin position="1041"/>
        <end position="1045"/>
    </location>
</feature>
<feature type="compositionally biased region" description="Polar residues" evidence="5">
    <location>
        <begin position="396"/>
        <end position="406"/>
    </location>
</feature>
<feature type="compositionally biased region" description="Polar residues" evidence="5">
    <location>
        <begin position="428"/>
        <end position="438"/>
    </location>
</feature>
<feature type="compositionally biased region" description="Low complexity" evidence="5">
    <location>
        <begin position="439"/>
        <end position="460"/>
    </location>
</feature>
<feature type="compositionally biased region" description="Low complexity" evidence="5">
    <location>
        <begin position="503"/>
        <end position="512"/>
    </location>
</feature>
<feature type="compositionally biased region" description="Polar residues" evidence="5">
    <location>
        <begin position="543"/>
        <end position="561"/>
    </location>
</feature>
<feature type="compositionally biased region" description="Polar residues" evidence="5">
    <location>
        <begin position="572"/>
        <end position="584"/>
    </location>
</feature>
<feature type="compositionally biased region" description="Basic and acidic residues" evidence="5">
    <location>
        <begin position="585"/>
        <end position="595"/>
    </location>
</feature>
<feature type="compositionally biased region" description="Low complexity" evidence="5">
    <location>
        <begin position="642"/>
        <end position="664"/>
    </location>
</feature>
<feature type="compositionally biased region" description="Polar residues" evidence="5">
    <location>
        <begin position="701"/>
        <end position="719"/>
    </location>
</feature>
<feature type="compositionally biased region" description="Polar residues" evidence="5">
    <location>
        <begin position="750"/>
        <end position="770"/>
    </location>
</feature>
<feature type="compositionally biased region" description="Basic and acidic residues" evidence="5">
    <location>
        <begin position="771"/>
        <end position="781"/>
    </location>
</feature>
<feature type="compositionally biased region" description="Low complexity" evidence="5">
    <location>
        <begin position="965"/>
        <end position="987"/>
    </location>
</feature>
<feature type="compositionally biased region" description="Low complexity" evidence="5">
    <location>
        <begin position="1300"/>
        <end position="1317"/>
    </location>
</feature>
<feature type="modified residue" description="N-acetylserine" evidence="2">
    <location>
        <position position="2"/>
    </location>
</feature>
<feature type="modified residue" description="Phosphoserine" evidence="12 13">
    <location>
        <position position="215"/>
    </location>
</feature>
<feature type="modified residue" description="Phosphoserine" evidence="12 13">
    <location>
        <position position="544"/>
    </location>
</feature>
<feature type="modified residue" description="Phosphoserine" evidence="13">
    <location>
        <position position="562"/>
    </location>
</feature>
<feature type="modified residue" description="Phosphoserine; by CK1" evidence="2">
    <location>
        <position position="594"/>
    </location>
</feature>
<feature type="modified residue" description="N6-acetyllysine" evidence="14">
    <location>
        <position position="609"/>
    </location>
</feature>
<feature type="modified residue" description="N6-acetyllysine" evidence="14">
    <location>
        <position position="612"/>
    </location>
</feature>
<feature type="modified residue" description="N6-acetyllysine" evidence="14">
    <location>
        <position position="613"/>
    </location>
</feature>
<feature type="modified residue" description="N6-acetyllysine" evidence="2">
    <location>
        <position position="680"/>
    </location>
</feature>
<feature type="modified residue" description="Phosphoserine" evidence="2">
    <location>
        <position position="687"/>
    </location>
</feature>
<feature type="modified residue" description="Phosphoserine" evidence="12">
    <location>
        <position position="720"/>
    </location>
</feature>
<feature type="modified residue" description="Phosphoserine" evidence="12 13">
    <location>
        <position position="847"/>
    </location>
</feature>
<feature type="modified residue" description="Phosphoserine" evidence="12 13">
    <location>
        <position position="850"/>
    </location>
</feature>
<feature type="modified residue" description="Phosphoserine" evidence="2">
    <location>
        <position position="1040"/>
    </location>
</feature>
<feature type="modified residue" description="Asymmetric dimethylarginine" evidence="15">
    <location>
        <position position="1178"/>
    </location>
</feature>
<feature type="modified residue" description="Asymmetric dimethylarginine" evidence="15">
    <location>
        <position position="1184"/>
    </location>
</feature>
<feature type="modified residue" description="Asymmetric dimethylarginine" evidence="15">
    <location>
        <position position="1195"/>
    </location>
</feature>
<feature type="modified residue" description="Phosphoserine" evidence="2">
    <location>
        <position position="1304"/>
    </location>
</feature>
<keyword id="KW-0007">Acetylation</keyword>
<keyword id="KW-0010">Activator</keyword>
<keyword id="KW-0012">Acyltransferase</keyword>
<keyword id="KW-0963">Cytoplasm</keyword>
<keyword id="KW-0488">Methylation</keyword>
<keyword id="KW-0539">Nucleus</keyword>
<keyword id="KW-0597">Phosphoprotein</keyword>
<keyword id="KW-1185">Reference proteome</keyword>
<keyword id="KW-0677">Repeat</keyword>
<keyword id="KW-0804">Transcription</keyword>
<keyword id="KW-0805">Transcription regulation</keyword>
<keyword id="KW-0808">Transferase</keyword>
<gene>
    <name type="primary">Ncoa3</name>
    <name type="synonym">Aib1</name>
    <name type="synonym">Pcip</name>
    <name type="synonym">Rac3</name>
    <name type="synonym">Tram1</name>
</gene>
<evidence type="ECO:0000250" key="1"/>
<evidence type="ECO:0000250" key="2">
    <source>
        <dbReference type="UniProtKB" id="Q9Y6Q9"/>
    </source>
</evidence>
<evidence type="ECO:0000255" key="3">
    <source>
        <dbReference type="PROSITE-ProRule" id="PRU00140"/>
    </source>
</evidence>
<evidence type="ECO:0000255" key="4">
    <source>
        <dbReference type="PROSITE-ProRule" id="PRU00981"/>
    </source>
</evidence>
<evidence type="ECO:0000256" key="5">
    <source>
        <dbReference type="SAM" id="MobiDB-lite"/>
    </source>
</evidence>
<evidence type="ECO:0000269" key="6">
    <source>
    </source>
</evidence>
<evidence type="ECO:0000269" key="7">
    <source>
    </source>
</evidence>
<evidence type="ECO:0000269" key="8">
    <source>
    </source>
</evidence>
<evidence type="ECO:0000269" key="9">
    <source>
    </source>
</evidence>
<evidence type="ECO:0000269" key="10">
    <source>
    </source>
</evidence>
<evidence type="ECO:0000305" key="11"/>
<evidence type="ECO:0007744" key="12">
    <source>
    </source>
</evidence>
<evidence type="ECO:0007744" key="13">
    <source>
    </source>
</evidence>
<evidence type="ECO:0007744" key="14">
    <source>
    </source>
</evidence>
<evidence type="ECO:0007744" key="15">
    <source>
    </source>
</evidence>
<dbReference type="EC" id="2.3.1.48"/>
<dbReference type="EMBL" id="AF000581">
    <property type="protein sequence ID" value="AAC05020.1"/>
    <property type="molecule type" value="mRNA"/>
</dbReference>
<dbReference type="EMBL" id="AK021229">
    <property type="status" value="NOT_ANNOTATED_CDS"/>
    <property type="molecule type" value="mRNA"/>
</dbReference>
<dbReference type="DIP" id="DIP-44921N"/>
<dbReference type="FunCoup" id="O09000">
    <property type="interactions" value="2395"/>
</dbReference>
<dbReference type="IntAct" id="O09000">
    <property type="interactions" value="16"/>
</dbReference>
<dbReference type="MINT" id="O09000"/>
<dbReference type="STRING" id="10090.ENSMUSP00000085416"/>
<dbReference type="GlyGen" id="O09000">
    <property type="glycosylation" value="6 sites, 1 O-linked glycan (5 sites)"/>
</dbReference>
<dbReference type="iPTMnet" id="O09000"/>
<dbReference type="PhosphoSitePlus" id="O09000"/>
<dbReference type="SwissPalm" id="O09000"/>
<dbReference type="jPOST" id="O09000"/>
<dbReference type="PaxDb" id="10090-ENSMUSP00000085416"/>
<dbReference type="PeptideAtlas" id="O09000"/>
<dbReference type="ProteomicsDB" id="287454"/>
<dbReference type="Pumba" id="O09000"/>
<dbReference type="AGR" id="MGI:1276535"/>
<dbReference type="MGI" id="MGI:1276535">
    <property type="gene designation" value="Ncoa3"/>
</dbReference>
<dbReference type="eggNOG" id="KOG3561">
    <property type="taxonomic scope" value="Eukaryota"/>
</dbReference>
<dbReference type="InParanoid" id="O09000"/>
<dbReference type="Reactome" id="R-MMU-5687128">
    <property type="pathway name" value="MAPK6/MAPK4 signaling"/>
</dbReference>
<dbReference type="Reactome" id="R-MMU-9018519">
    <property type="pathway name" value="Estrogen-dependent gene expression"/>
</dbReference>
<dbReference type="ChiTaRS" id="Ncoa3">
    <property type="organism name" value="mouse"/>
</dbReference>
<dbReference type="PRO" id="PR:O09000"/>
<dbReference type="Proteomes" id="UP000000589">
    <property type="component" value="Unplaced"/>
</dbReference>
<dbReference type="RNAct" id="O09000">
    <property type="molecule type" value="protein"/>
</dbReference>
<dbReference type="GO" id="GO:0005737">
    <property type="term" value="C:cytoplasm"/>
    <property type="evidence" value="ECO:0007669"/>
    <property type="project" value="UniProtKB-SubCell"/>
</dbReference>
<dbReference type="GO" id="GO:0005654">
    <property type="term" value="C:nucleoplasm"/>
    <property type="evidence" value="ECO:0000304"/>
    <property type="project" value="Reactome"/>
</dbReference>
<dbReference type="GO" id="GO:0005634">
    <property type="term" value="C:nucleus"/>
    <property type="evidence" value="ECO:0000314"/>
    <property type="project" value="MGI"/>
</dbReference>
<dbReference type="GO" id="GO:0090575">
    <property type="term" value="C:RNA polymerase II transcription regulator complex"/>
    <property type="evidence" value="ECO:0000314"/>
    <property type="project" value="MGI"/>
</dbReference>
<dbReference type="GO" id="GO:0003682">
    <property type="term" value="F:chromatin binding"/>
    <property type="evidence" value="ECO:0000314"/>
    <property type="project" value="MGI"/>
</dbReference>
<dbReference type="GO" id="GO:0001228">
    <property type="term" value="F:DNA-binding transcription activator activity, RNA polymerase II-specific"/>
    <property type="evidence" value="ECO:0000314"/>
    <property type="project" value="MGI"/>
</dbReference>
<dbReference type="GO" id="GO:0004402">
    <property type="term" value="F:histone acetyltransferase activity"/>
    <property type="evidence" value="ECO:0007669"/>
    <property type="project" value="UniProtKB-EC"/>
</dbReference>
<dbReference type="GO" id="GO:0016922">
    <property type="term" value="F:nuclear receptor binding"/>
    <property type="evidence" value="ECO:0007669"/>
    <property type="project" value="InterPro"/>
</dbReference>
<dbReference type="GO" id="GO:0046983">
    <property type="term" value="F:protein dimerization activity"/>
    <property type="evidence" value="ECO:0007669"/>
    <property type="project" value="InterPro"/>
</dbReference>
<dbReference type="GO" id="GO:0000993">
    <property type="term" value="F:RNA polymerase II complex binding"/>
    <property type="evidence" value="ECO:0000314"/>
    <property type="project" value="UniProtKB"/>
</dbReference>
<dbReference type="GO" id="GO:0003713">
    <property type="term" value="F:transcription coactivator activity"/>
    <property type="evidence" value="ECO:0000314"/>
    <property type="project" value="UniProtKB"/>
</dbReference>
<dbReference type="GO" id="GO:0043697">
    <property type="term" value="P:cell dedifferentiation"/>
    <property type="evidence" value="ECO:0000315"/>
    <property type="project" value="UniProtKB"/>
</dbReference>
<dbReference type="GO" id="GO:0060713">
    <property type="term" value="P:labyrinthine layer morphogenesis"/>
    <property type="evidence" value="ECO:0000316"/>
    <property type="project" value="MGI"/>
</dbReference>
<dbReference type="GO" id="GO:0060744">
    <property type="term" value="P:mammary gland branching involved in thelarche"/>
    <property type="evidence" value="ECO:0000315"/>
    <property type="project" value="MGI"/>
</dbReference>
<dbReference type="GO" id="GO:0035264">
    <property type="term" value="P:multicellular organism growth"/>
    <property type="evidence" value="ECO:0000315"/>
    <property type="project" value="MGI"/>
</dbReference>
<dbReference type="GO" id="GO:2000737">
    <property type="term" value="P:negative regulation of stem cell differentiation"/>
    <property type="evidence" value="ECO:0000315"/>
    <property type="project" value="MGI"/>
</dbReference>
<dbReference type="GO" id="GO:0010628">
    <property type="term" value="P:positive regulation of gene expression"/>
    <property type="evidence" value="ECO:0000315"/>
    <property type="project" value="MGI"/>
</dbReference>
<dbReference type="GO" id="GO:1902459">
    <property type="term" value="P:positive regulation of stem cell population maintenance"/>
    <property type="evidence" value="ECO:0000315"/>
    <property type="project" value="UniProtKB"/>
</dbReference>
<dbReference type="GO" id="GO:2000035">
    <property type="term" value="P:regulation of stem cell division"/>
    <property type="evidence" value="ECO:0000315"/>
    <property type="project" value="UniProtKB"/>
</dbReference>
<dbReference type="GO" id="GO:2000036">
    <property type="term" value="P:regulation of stem cell population maintenance"/>
    <property type="evidence" value="ECO:0000315"/>
    <property type="project" value="MGI"/>
</dbReference>
<dbReference type="GO" id="GO:0072091">
    <property type="term" value="P:regulation of stem cell proliferation"/>
    <property type="evidence" value="ECO:0000315"/>
    <property type="project" value="MGI"/>
</dbReference>
<dbReference type="CDD" id="cd00130">
    <property type="entry name" value="PAS"/>
    <property type="match status" value="1"/>
</dbReference>
<dbReference type="FunFam" id="3.30.450.20:FF:000008">
    <property type="entry name" value="Nuclear receptor coactivator"/>
    <property type="match status" value="1"/>
</dbReference>
<dbReference type="FunFam" id="4.10.280.10:FF:000008">
    <property type="entry name" value="Nuclear receptor coactivator"/>
    <property type="match status" value="1"/>
</dbReference>
<dbReference type="FunFam" id="3.30.450.20:FF:000341">
    <property type="entry name" value="Nuclear receptor coactivator 3"/>
    <property type="match status" value="1"/>
</dbReference>
<dbReference type="Gene3D" id="6.10.140.410">
    <property type="match status" value="1"/>
</dbReference>
<dbReference type="Gene3D" id="4.10.280.10">
    <property type="entry name" value="Helix-loop-helix DNA-binding domain"/>
    <property type="match status" value="1"/>
</dbReference>
<dbReference type="Gene3D" id="3.30.450.20">
    <property type="entry name" value="PAS domain"/>
    <property type="match status" value="2"/>
</dbReference>
<dbReference type="InterPro" id="IPR011598">
    <property type="entry name" value="bHLH_dom"/>
</dbReference>
<dbReference type="InterPro" id="IPR056193">
    <property type="entry name" value="bHLH_NCOA1-3"/>
</dbReference>
<dbReference type="InterPro" id="IPR036638">
    <property type="entry name" value="HLH_DNA-bd_sf"/>
</dbReference>
<dbReference type="InterPro" id="IPR010011">
    <property type="entry name" value="NCO_DUF1518"/>
</dbReference>
<dbReference type="InterPro" id="IPR032565">
    <property type="entry name" value="NCOA2/3_DUF4927"/>
</dbReference>
<dbReference type="InterPro" id="IPR009110">
    <property type="entry name" value="Nuc_rcpt_coact"/>
</dbReference>
<dbReference type="InterPro" id="IPR014920">
    <property type="entry name" value="Nuc_rcpt_coact_Ncoa-typ"/>
</dbReference>
<dbReference type="InterPro" id="IPR037077">
    <property type="entry name" value="Nuc_rcpt_coact_Ncoa_int_sf"/>
</dbReference>
<dbReference type="InterPro" id="IPR017426">
    <property type="entry name" value="Nuclear_rcpt_coactivator"/>
</dbReference>
<dbReference type="InterPro" id="IPR000014">
    <property type="entry name" value="PAS"/>
</dbReference>
<dbReference type="InterPro" id="IPR035965">
    <property type="entry name" value="PAS-like_dom_sf"/>
</dbReference>
<dbReference type="InterPro" id="IPR013767">
    <property type="entry name" value="PAS_fold"/>
</dbReference>
<dbReference type="InterPro" id="IPR014935">
    <property type="entry name" value="SRC/p160_LXXLL"/>
</dbReference>
<dbReference type="PANTHER" id="PTHR10684">
    <property type="entry name" value="NUCLEAR RECEPTOR COACTIVATOR"/>
    <property type="match status" value="1"/>
</dbReference>
<dbReference type="PANTHER" id="PTHR10684:SF3">
    <property type="entry name" value="NUCLEAR RECEPTOR COACTIVATOR 3"/>
    <property type="match status" value="1"/>
</dbReference>
<dbReference type="Pfam" id="PF23172">
    <property type="entry name" value="bHLH_NCOA"/>
    <property type="match status" value="1"/>
</dbReference>
<dbReference type="Pfam" id="PF07469">
    <property type="entry name" value="DUF1518"/>
    <property type="match status" value="1"/>
</dbReference>
<dbReference type="Pfam" id="PF16279">
    <property type="entry name" value="DUF4927"/>
    <property type="match status" value="1"/>
</dbReference>
<dbReference type="Pfam" id="PF16665">
    <property type="entry name" value="NCOA_u2"/>
    <property type="match status" value="1"/>
</dbReference>
<dbReference type="Pfam" id="PF08815">
    <property type="entry name" value="Nuc_rec_co-act"/>
    <property type="match status" value="1"/>
</dbReference>
<dbReference type="Pfam" id="PF00989">
    <property type="entry name" value="PAS"/>
    <property type="match status" value="1"/>
</dbReference>
<dbReference type="Pfam" id="PF14598">
    <property type="entry name" value="PAS_11"/>
    <property type="match status" value="1"/>
</dbReference>
<dbReference type="Pfam" id="PF08832">
    <property type="entry name" value="SRC-1"/>
    <property type="match status" value="1"/>
</dbReference>
<dbReference type="PIRSF" id="PIRSF038181">
    <property type="entry name" value="Nuclear_receptor_coactivator"/>
    <property type="match status" value="1"/>
</dbReference>
<dbReference type="SMART" id="SM01151">
    <property type="entry name" value="DUF1518"/>
    <property type="match status" value="1"/>
</dbReference>
<dbReference type="SMART" id="SM00353">
    <property type="entry name" value="HLH"/>
    <property type="match status" value="1"/>
</dbReference>
<dbReference type="SMART" id="SM00091">
    <property type="entry name" value="PAS"/>
    <property type="match status" value="1"/>
</dbReference>
<dbReference type="SUPFAM" id="SSF47459">
    <property type="entry name" value="HLH, helix-loop-helix DNA-binding domain"/>
    <property type="match status" value="1"/>
</dbReference>
<dbReference type="SUPFAM" id="SSF69125">
    <property type="entry name" value="Nuclear receptor coactivator interlocking domain"/>
    <property type="match status" value="1"/>
</dbReference>
<dbReference type="SUPFAM" id="SSF55785">
    <property type="entry name" value="PYP-like sensor domain (PAS domain)"/>
    <property type="match status" value="2"/>
</dbReference>
<dbReference type="PROSITE" id="PS50888">
    <property type="entry name" value="BHLH"/>
    <property type="match status" value="1"/>
</dbReference>
<dbReference type="PROSITE" id="PS50112">
    <property type="entry name" value="PAS"/>
    <property type="match status" value="1"/>
</dbReference>
<organism>
    <name type="scientific">Mus musculus</name>
    <name type="common">Mouse</name>
    <dbReference type="NCBI Taxonomy" id="10090"/>
    <lineage>
        <taxon>Eukaryota</taxon>
        <taxon>Metazoa</taxon>
        <taxon>Chordata</taxon>
        <taxon>Craniata</taxon>
        <taxon>Vertebrata</taxon>
        <taxon>Euteleostomi</taxon>
        <taxon>Mammalia</taxon>
        <taxon>Eutheria</taxon>
        <taxon>Euarchontoglires</taxon>
        <taxon>Glires</taxon>
        <taxon>Rodentia</taxon>
        <taxon>Myomorpha</taxon>
        <taxon>Muroidea</taxon>
        <taxon>Muridae</taxon>
        <taxon>Murinae</taxon>
        <taxon>Mus</taxon>
        <taxon>Mus</taxon>
    </lineage>
</organism>
<sequence>MSGLGESSLDPLAAESRKRKLPCDAPGQGLVYSGEKWRREQESKYIEELAELISANLSDIDNFNVKPDKCAILKETVRQIRQIKEQGKTISSDDDVQKADVSSTGQGVIDKDSLGPLLLQALDGFLFVVNRDGNIVFVSENVTQYLQYKQEDLVNTSVYSILHEPRRKDFLNTYQNPQLMEFLGLMRTRDKKAPYILIVRMLMKTHDILEDVNASPETRQRYETMQCFALSQPRAMLEEGEDLQCCMICVARRVTAPFPSSPESFITRHDLSGKVVNIDTNSLRSSMRPGFEDIIRRCIQRFFSLNDGQSWSQKRHYQEAYVHGHAETPVYRFSLADGTIVSAQTKSKLFRNPVTNDRHGFISTHFLQREQNGYRPNPIPQDKGIRPPAAGCGVSMSPNQNVQMMGSRTYGVPDPSNTGQMGGARYGASSSVASLTPGQSLQSPSSYQNSSYGLSMSSPPHGSPGLGPNQQNIMISPRNRGSPKMASHQFSPAAGAHSPMGPSGNTGSHSFSSSSLSALQAISEGVGTSLLSTLSSPGPKLDNSPNMNISQPSKVSGQDSKSPLGLYCEQNPVESSVCQSNSRDPQVKKESKESSGEVSETPRGPLESKGHKKLLQLLTCSSDDRGHSSLTNSPLDPNCKDSSVSVTSPSGVSSSTSGTVSSTSNVHGSLLQEKHRILHKLLQNGNSPAEVAKITAEATGKDTSSTASCGEGTTRQEQLSPKKKENNALLRYLLDRDDPSDVLAKELQPQADSGDSKLSQCSCSTNPSSGQEKDPKIKTETNDEVSGDLDNLDAILGDLTSSDFYNNPTNGGHPGAKQQMFAGPSSLGLRSPQPVQSVRPPYNRAVSLDSPVSVGSGPPVKNVSAFPGLPKQPILAGNPRMMDSQENYGANMGPNRNVPVNPTSSPGDWGLANSRASRMEPLASSPLGRTGADYSATLPRPAMGGSVPTLPLRSNRLPGARPSLQQQQQQQQQQQQQQQQQQQQQQQMLQMRTGEIPMGMGVNPYSPAVQSNQPGSWPEGMLSMEQGPHGSQNRPLLRNSLDDLLGPPSNAEGQSDERALLDQLHTFLSNTDATGLEEIDRALGIPELVNQGQALESKQDVFQGQEAAVMMDQKAALYGQTYPAQGPPLQGGFNLQGQSPSFNSMMGQISQQGSFPLQGMHPRAGLVRPRTNTPKQLRMQLQQRLQGQQFLNQSRQALEMKMENPAGTAVMRPMMPQAFFNAQMAAQQKRELMSHHLQQQRMAMMMSQPQPQAFSPPPNVTASPSMDGVLAGSAMPQAPPQQFPYPANYGMGQPPEPAFGRGSSPPSAMMSSRMGPSQNAMVQHPQPTPMYQPSDMKGWPSGNLARNGSFPQQQFAPQGNPAAYNMVHMNSSGGHLGQMAMTPMPMSGMPMGPDQKYC</sequence>
<proteinExistence type="evidence at protein level"/>